<feature type="chain" id="PRO_0000184949" description="Cytosolic Fe-S cluster assembly factor NUBP1 homolog">
    <location>
        <begin position="1"/>
        <end position="313"/>
    </location>
</feature>
<feature type="region of interest" description="Disordered" evidence="2">
    <location>
        <begin position="1"/>
        <end position="25"/>
    </location>
</feature>
<feature type="binding site" evidence="1">
    <location>
        <position position="12"/>
    </location>
    <ligand>
        <name>[4Fe-4S] cluster</name>
        <dbReference type="ChEBI" id="CHEBI:49883"/>
        <label>1</label>
    </ligand>
</feature>
<feature type="binding site" evidence="1">
    <location>
        <position position="26"/>
    </location>
    <ligand>
        <name>[4Fe-4S] cluster</name>
        <dbReference type="ChEBI" id="CHEBI:49883"/>
        <label>1</label>
    </ligand>
</feature>
<feature type="binding site" evidence="1">
    <location>
        <position position="29"/>
    </location>
    <ligand>
        <name>[4Fe-4S] cluster</name>
        <dbReference type="ChEBI" id="CHEBI:49883"/>
        <label>1</label>
    </ligand>
</feature>
<feature type="binding site" evidence="1">
    <location>
        <position position="35"/>
    </location>
    <ligand>
        <name>[4Fe-4S] cluster</name>
        <dbReference type="ChEBI" id="CHEBI:49883"/>
        <label>1</label>
    </ligand>
</feature>
<feature type="binding site" evidence="1">
    <location>
        <begin position="66"/>
        <end position="73"/>
    </location>
    <ligand>
        <name>ATP</name>
        <dbReference type="ChEBI" id="CHEBI:30616"/>
    </ligand>
</feature>
<feature type="binding site" evidence="1">
    <location>
        <position position="240"/>
    </location>
    <ligand>
        <name>[4Fe-4S] cluster</name>
        <dbReference type="ChEBI" id="CHEBI:49883"/>
        <label>2</label>
        <note>ligand shared with heterodimeric partner</note>
    </ligand>
</feature>
<feature type="binding site" evidence="1">
    <location>
        <position position="243"/>
    </location>
    <ligand>
        <name>[4Fe-4S] cluster</name>
        <dbReference type="ChEBI" id="CHEBI:49883"/>
        <label>2</label>
        <note>ligand shared with heterodimeric partner</note>
    </ligand>
</feature>
<protein>
    <recommendedName>
        <fullName evidence="1">Cytosolic Fe-S cluster assembly factor NUBP1 homolog</fullName>
    </recommendedName>
    <alternativeName>
        <fullName evidence="4">Nucleotide binding protein 1 homolog</fullName>
    </alternativeName>
</protein>
<organism>
    <name type="scientific">Caenorhabditis elegans</name>
    <dbReference type="NCBI Taxonomy" id="6239"/>
    <lineage>
        <taxon>Eukaryota</taxon>
        <taxon>Metazoa</taxon>
        <taxon>Ecdysozoa</taxon>
        <taxon>Nematoda</taxon>
        <taxon>Chromadorea</taxon>
        <taxon>Rhabditida</taxon>
        <taxon>Rhabditina</taxon>
        <taxon>Rhabditomorpha</taxon>
        <taxon>Rhabditoidea</taxon>
        <taxon>Rhabditidae</taxon>
        <taxon>Peloderinae</taxon>
        <taxon>Caenorhabditis</taxon>
    </lineage>
</organism>
<reference key="1">
    <citation type="journal article" date="1998" name="Science">
        <title>Genome sequence of the nematode C. elegans: a platform for investigating biology.</title>
        <authorList>
            <consortium name="The C. elegans sequencing consortium"/>
        </authorList>
    </citation>
    <scope>NUCLEOTIDE SEQUENCE [LARGE SCALE GENOMIC DNA]</scope>
    <source>
        <strain>Bristol N2</strain>
    </source>
</reference>
<reference key="2">
    <citation type="journal article" date="2014" name="Cell. Mol. Life Sci.">
        <title>The nucleotide-binding proteins Nubp1 and Nubp2 are negative regulators of ciliogenesis.</title>
        <authorList>
            <person name="Kypri E."/>
            <person name="Christodoulou A."/>
            <person name="Maimaris G."/>
            <person name="Lethan M."/>
            <person name="Markaki M."/>
            <person name="Lysandrou C."/>
            <person name="Lederer C.W."/>
            <person name="Tavernarakis N."/>
            <person name="Geimer S."/>
            <person name="Pedersen L.B."/>
            <person name="Santama N."/>
        </authorList>
    </citation>
    <scope>FUNCTION</scope>
    <scope>SUBCELLULAR LOCATION</scope>
    <scope>TISSUE SPECIFICITY</scope>
    <scope>DISRUPTION PHENOTYPE</scope>
</reference>
<name>NUBP1_CAEEL</name>
<proteinExistence type="evidence at transcript level"/>
<dbReference type="EMBL" id="Z80216">
    <property type="protein sequence ID" value="CAB02285.2"/>
    <property type="molecule type" value="Genomic_DNA"/>
</dbReference>
<dbReference type="PIR" id="T20728">
    <property type="entry name" value="T20728"/>
</dbReference>
<dbReference type="RefSeq" id="NP_492653.2">
    <property type="nucleotide sequence ID" value="NM_060252.4"/>
</dbReference>
<dbReference type="SMR" id="Q93459"/>
<dbReference type="BioGRID" id="38289">
    <property type="interactions" value="4"/>
</dbReference>
<dbReference type="FunCoup" id="Q93459">
    <property type="interactions" value="1695"/>
</dbReference>
<dbReference type="IntAct" id="Q93459">
    <property type="interactions" value="1"/>
</dbReference>
<dbReference type="STRING" id="6239.F10G8.6.1"/>
<dbReference type="iPTMnet" id="Q93459"/>
<dbReference type="PaxDb" id="6239-F10G8.6"/>
<dbReference type="PeptideAtlas" id="Q93459"/>
<dbReference type="EnsemblMetazoa" id="F10G8.6.1">
    <property type="protein sequence ID" value="F10G8.6.1"/>
    <property type="gene ID" value="WBGene00008664"/>
</dbReference>
<dbReference type="GeneID" id="172868"/>
<dbReference type="KEGG" id="cel:CELE_F10G8.6"/>
<dbReference type="UCSC" id="F10G8.6">
    <property type="organism name" value="c. elegans"/>
</dbReference>
<dbReference type="AGR" id="WB:WBGene00008664"/>
<dbReference type="CTD" id="172868"/>
<dbReference type="WormBase" id="F10G8.6">
    <property type="protein sequence ID" value="CE30749"/>
    <property type="gene ID" value="WBGene00008664"/>
    <property type="gene designation" value="nubp-1"/>
</dbReference>
<dbReference type="eggNOG" id="KOG3022">
    <property type="taxonomic scope" value="Eukaryota"/>
</dbReference>
<dbReference type="GeneTree" id="ENSGT00950000183193"/>
<dbReference type="HOGENOM" id="CLU_024839_0_1_1"/>
<dbReference type="InParanoid" id="Q93459"/>
<dbReference type="OMA" id="VSGCPMR"/>
<dbReference type="OrthoDB" id="1741334at2759"/>
<dbReference type="PhylomeDB" id="Q93459"/>
<dbReference type="PRO" id="PR:Q93459"/>
<dbReference type="Proteomes" id="UP000001940">
    <property type="component" value="Chromosome I"/>
</dbReference>
<dbReference type="Bgee" id="WBGene00008664">
    <property type="expression patterns" value="Expressed in germ line (C elegans) and 4 other cell types or tissues"/>
</dbReference>
<dbReference type="GO" id="GO:0005929">
    <property type="term" value="C:cilium"/>
    <property type="evidence" value="ECO:0007669"/>
    <property type="project" value="UniProtKB-KW"/>
</dbReference>
<dbReference type="GO" id="GO:0005829">
    <property type="term" value="C:cytosol"/>
    <property type="evidence" value="ECO:0000250"/>
    <property type="project" value="UniProtKB"/>
</dbReference>
<dbReference type="GO" id="GO:0051539">
    <property type="term" value="F:4 iron, 4 sulfur cluster binding"/>
    <property type="evidence" value="ECO:0007669"/>
    <property type="project" value="UniProtKB-UniRule"/>
</dbReference>
<dbReference type="GO" id="GO:0005524">
    <property type="term" value="F:ATP binding"/>
    <property type="evidence" value="ECO:0007669"/>
    <property type="project" value="UniProtKB-KW"/>
</dbReference>
<dbReference type="GO" id="GO:0016887">
    <property type="term" value="F:ATP hydrolysis activity"/>
    <property type="evidence" value="ECO:0007669"/>
    <property type="project" value="InterPro"/>
</dbReference>
<dbReference type="GO" id="GO:0140663">
    <property type="term" value="F:ATP-dependent FeS chaperone activity"/>
    <property type="evidence" value="ECO:0007669"/>
    <property type="project" value="InterPro"/>
</dbReference>
<dbReference type="GO" id="GO:0051536">
    <property type="term" value="F:iron-sulfur cluster binding"/>
    <property type="evidence" value="ECO:0000250"/>
    <property type="project" value="UniProtKB"/>
</dbReference>
<dbReference type="GO" id="GO:0046872">
    <property type="term" value="F:metal ion binding"/>
    <property type="evidence" value="ECO:0007669"/>
    <property type="project" value="UniProtKB-KW"/>
</dbReference>
<dbReference type="GO" id="GO:0030030">
    <property type="term" value="P:cell projection organization"/>
    <property type="evidence" value="ECO:0007669"/>
    <property type="project" value="UniProtKB-KW"/>
</dbReference>
<dbReference type="GO" id="GO:0016226">
    <property type="term" value="P:iron-sulfur cluster assembly"/>
    <property type="evidence" value="ECO:0000250"/>
    <property type="project" value="UniProtKB"/>
</dbReference>
<dbReference type="GO" id="GO:1902855">
    <property type="term" value="P:regulation of non-motile cilium assembly"/>
    <property type="evidence" value="ECO:0000315"/>
    <property type="project" value="WormBase"/>
</dbReference>
<dbReference type="CDD" id="cd02037">
    <property type="entry name" value="Mrp_NBP35"/>
    <property type="match status" value="1"/>
</dbReference>
<dbReference type="FunFam" id="3.40.50.300:FF:002354">
    <property type="entry name" value="Cytosolic Fe-S cluster assembly factor NUBP1 homolog"/>
    <property type="match status" value="1"/>
</dbReference>
<dbReference type="Gene3D" id="3.40.50.300">
    <property type="entry name" value="P-loop containing nucleotide triphosphate hydrolases"/>
    <property type="match status" value="1"/>
</dbReference>
<dbReference type="HAMAP" id="MF_02040">
    <property type="entry name" value="Mrp_NBP35"/>
    <property type="match status" value="1"/>
</dbReference>
<dbReference type="HAMAP" id="MF_03038">
    <property type="entry name" value="NUBP1"/>
    <property type="match status" value="1"/>
</dbReference>
<dbReference type="InterPro" id="IPR003593">
    <property type="entry name" value="AAA+_ATPase"/>
</dbReference>
<dbReference type="InterPro" id="IPR000808">
    <property type="entry name" value="Mrp-like_CS"/>
</dbReference>
<dbReference type="InterPro" id="IPR019591">
    <property type="entry name" value="Mrp/NBP35_ATP-bd"/>
</dbReference>
<dbReference type="InterPro" id="IPR028601">
    <property type="entry name" value="NUBP1/Nbp35"/>
</dbReference>
<dbReference type="InterPro" id="IPR027417">
    <property type="entry name" value="P-loop_NTPase"/>
</dbReference>
<dbReference type="InterPro" id="IPR033756">
    <property type="entry name" value="YlxH/NBP35"/>
</dbReference>
<dbReference type="PANTHER" id="PTHR23264:SF35">
    <property type="entry name" value="CYTOSOLIC FE-S CLUSTER ASSEMBLY FACTOR NUBP1"/>
    <property type="match status" value="1"/>
</dbReference>
<dbReference type="PANTHER" id="PTHR23264">
    <property type="entry name" value="NUCLEOTIDE-BINDING PROTEIN NBP35 YEAST -RELATED"/>
    <property type="match status" value="1"/>
</dbReference>
<dbReference type="Pfam" id="PF10609">
    <property type="entry name" value="ParA"/>
    <property type="match status" value="1"/>
</dbReference>
<dbReference type="SMART" id="SM00382">
    <property type="entry name" value="AAA"/>
    <property type="match status" value="1"/>
</dbReference>
<dbReference type="SUPFAM" id="SSF52540">
    <property type="entry name" value="P-loop containing nucleoside triphosphate hydrolases"/>
    <property type="match status" value="1"/>
</dbReference>
<dbReference type="PROSITE" id="PS01215">
    <property type="entry name" value="MRP"/>
    <property type="match status" value="1"/>
</dbReference>
<evidence type="ECO:0000255" key="1">
    <source>
        <dbReference type="HAMAP-Rule" id="MF_03038"/>
    </source>
</evidence>
<evidence type="ECO:0000256" key="2">
    <source>
        <dbReference type="SAM" id="MobiDB-lite"/>
    </source>
</evidence>
<evidence type="ECO:0000269" key="3">
    <source>
    </source>
</evidence>
<evidence type="ECO:0000312" key="4">
    <source>
        <dbReference type="WormBase" id="F10G8.6"/>
    </source>
</evidence>
<comment type="function">
    <text evidence="1 3">Component of the cytosolic iron-sulfur (Fe/S) protein assembly (CIA) machinery. Required for maturation of extramitochondrial Fe-S proteins. The NUBP1-NUBP2 heterotetramer forms a Fe-S scaffold complex, mediating the de novo assembly of an Fe-S cluster and its transfer to target apoproteins (By similarity). Regulates cilium formation and structure (PubMed:23807208).</text>
</comment>
<comment type="cofactor">
    <cofactor evidence="1">
        <name>[4Fe-4S] cluster</name>
        <dbReference type="ChEBI" id="CHEBI:49883"/>
    </cofactor>
    <text evidence="1">Binds 4 [4Fe-4S] clusters per heterotetramer. Contains two stable clusters in the N-termini of NUBP1 and two labile, bridging clusters between subunits of the NUBP1-NUBP2 heterotetramer.</text>
</comment>
<comment type="subunit">
    <text evidence="1">Heterotetramer of 2 NUBP1 and 2 NUBP2 chains.</text>
</comment>
<comment type="subcellular location">
    <subcellularLocation>
        <location evidence="1">Cytoplasm</location>
    </subcellularLocation>
    <subcellularLocation>
        <location evidence="3">Cell projection</location>
    </subcellularLocation>
</comment>
<comment type="tissue specificity">
    <text evidence="3">Expressed in head amphid and labial ciliated sensory neurons and tail phasmid ciliated chemosensory neurons.</text>
</comment>
<comment type="disruption phenotype">
    <text evidence="3">RNAi-mediated knockdown results in abnormal cilia morphology with the formation of 'wing-shaped' cilia structures and additional dendritic ciliated endings in amphid wing B (AWB) olfactory amphid neurons.</text>
</comment>
<comment type="similarity">
    <text evidence="1">Belongs to the Mrp/NBP35 ATP-binding proteins family. NUBP1/NBP35 subfamily.</text>
</comment>
<gene>
    <name evidence="4" type="primary">nubp-1</name>
    <name evidence="4" type="ORF">F10G8.6</name>
</gene>
<accession>Q93459</accession>
<keyword id="KW-0004">4Fe-4S</keyword>
<keyword id="KW-0067">ATP-binding</keyword>
<keyword id="KW-0966">Cell projection</keyword>
<keyword id="KW-0969">Cilium</keyword>
<keyword id="KW-0970">Cilium biogenesis/degradation</keyword>
<keyword id="KW-0963">Cytoplasm</keyword>
<keyword id="KW-0408">Iron</keyword>
<keyword id="KW-0411">Iron-sulfur</keyword>
<keyword id="KW-0479">Metal-binding</keyword>
<keyword id="KW-0547">Nucleotide-binding</keyword>
<keyword id="KW-1185">Reference proteome</keyword>
<sequence>MSDVPDDANAGCPGTGSAGAGKASGCAGCPNQGSCATGQGPPPDADVPKIQDRFSRIKHKILILSGKGGVGKSTLTSNLARALASDPSKQVAILDVDICGPSQPRMMGVEDEEVHNSADGWTPVGIQPNLTLMSIAFLLGDKNDAVIWRGARKNGMIKQFLKDVDWGEVDYLLIDTPPGTSDEHISLVQFLLQAGPLDGALIVSTPQEVSLLDVRKEVSFCVKTKVPILGVVENMARFVCPNCAHTTLLFPTSTGGAEQMCKDSNLELLAQLPLEPALAKALDNGEDFFETNPDSTLAKSFLDLAEKVKAKLV</sequence>